<keyword id="KW-0002">3D-structure</keyword>
<keyword id="KW-0997">Cell inner membrane</keyword>
<keyword id="KW-1003">Cell membrane</keyword>
<keyword id="KW-0175">Coiled coil</keyword>
<keyword id="KW-0449">Lipoprotein</keyword>
<keyword id="KW-0472">Membrane</keyword>
<keyword id="KW-0564">Palmitate</keyword>
<keyword id="KW-0646">Protease inhibitor</keyword>
<keyword id="KW-1185">Reference proteome</keyword>
<keyword id="KW-0732">Signal</keyword>
<keyword id="KW-0882">Thioester bond</keyword>
<comment type="function">
    <text evidence="3 5 6">Protects the bacterial cell from host peptidases (PubMed:18697741, PubMed:26100869, PubMed:26143919). Acts by a 'trapping' mechanism. Cleavage of the bait-region domain by host peptidases leads to a global conformational change, which results in entrapment of the host peptidase and activation of the thioester bond that covalently binds the attacking host peptidase (PubMed:26100869, PubMed:26143919). Trapped peptidases are still active except against very large substrates (PubMed:26100869). May protect the entire periplam, including the lipoproteins anchored to the periplasmic side of the outer membrane, against intruding endopeptidases (PubMed:26100869).</text>
</comment>
<comment type="subunit">
    <text evidence="4">May form homooligomers.</text>
</comment>
<comment type="subcellular location">
    <subcellularLocation>
        <location evidence="3 4">Cell inner membrane</location>
        <topology evidence="2">Lipid-anchor</topology>
        <orientation evidence="3">Periplasmic side</orientation>
    </subcellularLocation>
</comment>
<comment type="domain">
    <text evidence="5">Cleavage causes major structural rearrangement of more than half the 13-domain structure from a native to a compact induced form.</text>
</comment>
<comment type="miscellaneous">
    <text evidence="10">Bacterial alpha-2-macroglobulins were probably acquired one or more times by horizontal gene transfer from metazoan hosts.</text>
</comment>
<comment type="similarity">
    <text evidence="9">Belongs to the protease inhibitor I39 (alpha-2-macroglobulin) family. Bacterial alpha-2-macroglobulin subfamily.</text>
</comment>
<proteinExistence type="evidence at protein level"/>
<reference key="1">
    <citation type="journal article" date="1997" name="Science">
        <title>The complete genome sequence of Escherichia coli K-12.</title>
        <authorList>
            <person name="Blattner F.R."/>
            <person name="Plunkett G. III"/>
            <person name="Bloch C.A."/>
            <person name="Perna N.T."/>
            <person name="Burland V."/>
            <person name="Riley M."/>
            <person name="Collado-Vides J."/>
            <person name="Glasner J.D."/>
            <person name="Rode C.K."/>
            <person name="Mayhew G.F."/>
            <person name="Gregor J."/>
            <person name="Davis N.W."/>
            <person name="Kirkpatrick H.A."/>
            <person name="Goeden M.A."/>
            <person name="Rose D.J."/>
            <person name="Mau B."/>
            <person name="Shao Y."/>
        </authorList>
    </citation>
    <scope>NUCLEOTIDE SEQUENCE [LARGE SCALE GENOMIC DNA]</scope>
    <source>
        <strain>K12 / MG1655 / ATCC 47076</strain>
    </source>
</reference>
<reference key="2">
    <citation type="journal article" date="2006" name="Mol. Syst. Biol.">
        <title>Highly accurate genome sequences of Escherichia coli K-12 strains MG1655 and W3110.</title>
        <authorList>
            <person name="Hayashi K."/>
            <person name="Morooka N."/>
            <person name="Yamamoto Y."/>
            <person name="Fujita K."/>
            <person name="Isono K."/>
            <person name="Choi S."/>
            <person name="Ohtsubo E."/>
            <person name="Baba T."/>
            <person name="Wanner B.L."/>
            <person name="Mori H."/>
            <person name="Horiuchi T."/>
        </authorList>
    </citation>
    <scope>NUCLEOTIDE SEQUENCE [LARGE SCALE GENOMIC DNA]</scope>
    <source>
        <strain>K12 / W3110 / ATCC 27325 / DSM 5911</strain>
    </source>
</reference>
<reference key="3">
    <citation type="journal article" date="2004" name="Genome Biol.">
        <title>Bacterial alpha2-macroglobulins: colonization factors acquired by horizontal gene transfer from the metazoan genome?</title>
        <authorList>
            <person name="Budd A."/>
            <person name="Blandin S."/>
            <person name="Levashina E.A."/>
            <person name="Gibson T.J."/>
        </authorList>
    </citation>
    <scope>GENE FAMILY</scope>
</reference>
<reference key="4">
    <citation type="journal article" date="2008" name="J. Biol. Chem.">
        <title>alpha-macroglobulins are present in some Gram-negative bacteria: characterization of the alpha2-macroglobulin from Escherichia coli.</title>
        <authorList>
            <person name="Doan N."/>
            <person name="Gettins P.G."/>
        </authorList>
    </citation>
    <scope>FUNCTION</scope>
    <scope>SUBCELLULAR LOCATION</scope>
    <scope>THIOESTER BOND</scope>
</reference>
<reference key="5">
    <citation type="journal article" date="2011" name="J. Proteome Res.">
        <title>Systematic analysis of native membrane protein complexes in Escherichia coli.</title>
        <authorList>
            <person name="Maddalo G."/>
            <person name="Stenberg-Bruzell F."/>
            <person name="Gotzke H."/>
            <person name="Toddo S."/>
            <person name="Bjorkholm P."/>
            <person name="Eriksson H."/>
            <person name="Chovanec P."/>
            <person name="Genevaux P."/>
            <person name="Lehtio J."/>
            <person name="Ilag L.L."/>
            <person name="Daley D.O."/>
        </authorList>
    </citation>
    <scope>SUBUNIT</scope>
    <scope>SUBCELLULAR LOCATION</scope>
</reference>
<reference evidence="11" key="6">
    <citation type="journal article" date="2015" name="Acta Crystallogr. D">
        <title>Structure of protease-cleaved Escherichia coli alpha-2-macroglobulin reveals a putative mechanism of conformational activation for protease entrapment.</title>
        <authorList>
            <person name="Fyfe C.D."/>
            <person name="Grinter R."/>
            <person name="Josts I."/>
            <person name="Mosbahi K."/>
            <person name="Roszak A.W."/>
            <person name="Cogdell R.J."/>
            <person name="Wall D.M."/>
            <person name="Burchmore R.J."/>
            <person name="Byron O."/>
            <person name="Walker D."/>
        </authorList>
    </citation>
    <scope>X-RAY CRYSTALLOGRAPHY (3.65 ANGSTROMS) OF 23-1653</scope>
    <scope>FUNCTION</scope>
</reference>
<reference evidence="12 13 14 15 16" key="7">
    <citation type="journal article" date="2015" name="Proc. Natl. Acad. Sci. U.S.A.">
        <title>Structural and functional insights into Escherichia coli alpha2-macroglobulin endopeptidase snap-trap inhibition.</title>
        <authorList>
            <person name="Garcia-Ferrer I."/>
            <person name="Arede P."/>
            <person name="Gomez-Blanco J."/>
            <person name="Luque D."/>
            <person name="Duquerroy S."/>
            <person name="Caston J.R."/>
            <person name="Goulas T."/>
            <person name="Gomis-Ruth F.X."/>
        </authorList>
    </citation>
    <scope>X-RAY CRYSTALLOGRAPHY (1.60 ANGSTROMS) OF 163-368</scope>
    <scope>FUNCTION</scope>
    <scope>DOMAIN</scope>
</reference>
<evidence type="ECO:0000255" key="1"/>
<evidence type="ECO:0000255" key="2">
    <source>
        <dbReference type="PROSITE-ProRule" id="PRU00303"/>
    </source>
</evidence>
<evidence type="ECO:0000269" key="3">
    <source>
    </source>
</evidence>
<evidence type="ECO:0000269" key="4">
    <source>
    </source>
</evidence>
<evidence type="ECO:0000269" key="5">
    <source>
    </source>
</evidence>
<evidence type="ECO:0000269" key="6">
    <source>
    </source>
</evidence>
<evidence type="ECO:0000303" key="7">
    <source>
    </source>
</evidence>
<evidence type="ECO:0000303" key="8">
    <source>
    </source>
</evidence>
<evidence type="ECO:0000305" key="9"/>
<evidence type="ECO:0000305" key="10">
    <source>
    </source>
</evidence>
<evidence type="ECO:0007744" key="11">
    <source>
        <dbReference type="PDB" id="4RTD"/>
    </source>
</evidence>
<evidence type="ECO:0007744" key="12">
    <source>
        <dbReference type="PDB" id="4ZIQ"/>
    </source>
</evidence>
<evidence type="ECO:0007744" key="13">
    <source>
        <dbReference type="PDB" id="4ZIU"/>
    </source>
</evidence>
<evidence type="ECO:0007744" key="14">
    <source>
        <dbReference type="PDB" id="4ZJG"/>
    </source>
</evidence>
<evidence type="ECO:0007744" key="15">
    <source>
        <dbReference type="PDB" id="4ZJH"/>
    </source>
</evidence>
<evidence type="ECO:0007744" key="16">
    <source>
        <dbReference type="PDB" id="5A42"/>
    </source>
</evidence>
<evidence type="ECO:0007829" key="17">
    <source>
        <dbReference type="PDB" id="4ZIQ"/>
    </source>
</evidence>
<evidence type="ECO:0007829" key="18">
    <source>
        <dbReference type="PDB" id="4ZIU"/>
    </source>
</evidence>
<evidence type="ECO:0007829" key="19">
    <source>
        <dbReference type="PDB" id="4ZJG"/>
    </source>
</evidence>
<evidence type="ECO:0007829" key="20">
    <source>
        <dbReference type="PDB" id="4ZJH"/>
    </source>
</evidence>
<name>A2MG_ECOLI</name>
<dbReference type="EMBL" id="U00096">
    <property type="protein sequence ID" value="AAC75573.1"/>
    <property type="molecule type" value="Genomic_DNA"/>
</dbReference>
<dbReference type="EMBL" id="AP009048">
    <property type="protein sequence ID" value="BAE76729.1"/>
    <property type="molecule type" value="Genomic_DNA"/>
</dbReference>
<dbReference type="PIR" id="G65028">
    <property type="entry name" value="G65028"/>
</dbReference>
<dbReference type="RefSeq" id="NP_417015.1">
    <property type="nucleotide sequence ID" value="NC_000913.3"/>
</dbReference>
<dbReference type="RefSeq" id="WP_000736312.1">
    <property type="nucleotide sequence ID" value="NZ_LN832404.1"/>
</dbReference>
<dbReference type="PDB" id="4RTD">
    <property type="method" value="X-ray"/>
    <property type="resolution" value="3.65 A"/>
    <property type="chains" value="A=23-1653"/>
</dbReference>
<dbReference type="PDB" id="4ZIQ">
    <property type="method" value="X-ray"/>
    <property type="resolution" value="2.55 A"/>
    <property type="chains" value="A=40-1653"/>
</dbReference>
<dbReference type="PDB" id="4ZIU">
    <property type="method" value="X-ray"/>
    <property type="resolution" value="2.70 A"/>
    <property type="chains" value="A=1018-1653"/>
</dbReference>
<dbReference type="PDB" id="4ZJG">
    <property type="method" value="X-ray"/>
    <property type="resolution" value="2.30 A"/>
    <property type="chains" value="A=40-385"/>
</dbReference>
<dbReference type="PDB" id="4ZJH">
    <property type="method" value="X-ray"/>
    <property type="resolution" value="1.60 A"/>
    <property type="chains" value="A=163-368"/>
</dbReference>
<dbReference type="PDB" id="5A42">
    <property type="method" value="EM"/>
    <property type="resolution" value="16.00 A"/>
    <property type="chains" value="A=40-1653"/>
</dbReference>
<dbReference type="PDBsum" id="4RTD"/>
<dbReference type="PDBsum" id="4ZIQ"/>
<dbReference type="PDBsum" id="4ZIU"/>
<dbReference type="PDBsum" id="4ZJG"/>
<dbReference type="PDBsum" id="4ZJH"/>
<dbReference type="PDBsum" id="5A42"/>
<dbReference type="EMDB" id="EMD-3016"/>
<dbReference type="EMDB" id="EMD-3017"/>
<dbReference type="EMDB" id="EMD-3018"/>
<dbReference type="SMR" id="P76578"/>
<dbReference type="BioGRID" id="4260803">
    <property type="interactions" value="220"/>
</dbReference>
<dbReference type="DIP" id="DIP-28064N"/>
<dbReference type="FunCoup" id="P76578">
    <property type="interactions" value="153"/>
</dbReference>
<dbReference type="IntAct" id="P76578">
    <property type="interactions" value="15"/>
</dbReference>
<dbReference type="STRING" id="511145.b2520"/>
<dbReference type="MEROPS" id="I39.008"/>
<dbReference type="jPOST" id="P76578"/>
<dbReference type="PaxDb" id="511145-b2520"/>
<dbReference type="EnsemblBacteria" id="AAC75573">
    <property type="protein sequence ID" value="AAC75573"/>
    <property type="gene ID" value="b2520"/>
</dbReference>
<dbReference type="GeneID" id="947302"/>
<dbReference type="KEGG" id="ecj:JW2504"/>
<dbReference type="KEGG" id="eco:b2520"/>
<dbReference type="KEGG" id="ecoc:C3026_13970"/>
<dbReference type="PATRIC" id="fig|511145.12.peg.2619"/>
<dbReference type="EchoBASE" id="EB3175"/>
<dbReference type="eggNOG" id="COG2373">
    <property type="taxonomic scope" value="Bacteria"/>
</dbReference>
<dbReference type="HOGENOM" id="CLU_000965_1_0_6"/>
<dbReference type="InParanoid" id="P76578"/>
<dbReference type="OMA" id="LDRYPYG"/>
<dbReference type="OrthoDB" id="9767116at2"/>
<dbReference type="PhylomeDB" id="P76578"/>
<dbReference type="BioCyc" id="EcoCyc:G7323-MONOMER"/>
<dbReference type="EvolutionaryTrace" id="P76578"/>
<dbReference type="PRO" id="PR:P76578"/>
<dbReference type="Proteomes" id="UP000000625">
    <property type="component" value="Chromosome"/>
</dbReference>
<dbReference type="GO" id="GO:0005615">
    <property type="term" value="C:extracellular space"/>
    <property type="evidence" value="ECO:0007669"/>
    <property type="project" value="InterPro"/>
</dbReference>
<dbReference type="GO" id="GO:0005886">
    <property type="term" value="C:plasma membrane"/>
    <property type="evidence" value="ECO:0007669"/>
    <property type="project" value="UniProtKB-SubCell"/>
</dbReference>
<dbReference type="GO" id="GO:0004866">
    <property type="term" value="F:endopeptidase inhibitor activity"/>
    <property type="evidence" value="ECO:0000314"/>
    <property type="project" value="EcoCyc"/>
</dbReference>
<dbReference type="GO" id="GO:0042803">
    <property type="term" value="F:protein homodimerization activity"/>
    <property type="evidence" value="ECO:0000314"/>
    <property type="project" value="EcoCyc"/>
</dbReference>
<dbReference type="GO" id="GO:0006952">
    <property type="term" value="P:defense response"/>
    <property type="evidence" value="ECO:0000315"/>
    <property type="project" value="EcoCyc"/>
</dbReference>
<dbReference type="CDD" id="cd02891">
    <property type="entry name" value="A2M_like"/>
    <property type="match status" value="1"/>
</dbReference>
<dbReference type="FunFam" id="2.60.40.1930:FF:000014">
    <property type="entry name" value="Alpha-2-macroglobulin"/>
    <property type="match status" value="1"/>
</dbReference>
<dbReference type="Gene3D" id="1.50.10.20">
    <property type="match status" value="1"/>
</dbReference>
<dbReference type="Gene3D" id="2.60.40.1930">
    <property type="match status" value="1"/>
</dbReference>
<dbReference type="InterPro" id="IPR049120">
    <property type="entry name" value="A2M_bMG2"/>
</dbReference>
<dbReference type="InterPro" id="IPR011625">
    <property type="entry name" value="A2M_N_BRD"/>
</dbReference>
<dbReference type="InterPro" id="IPR049122">
    <property type="entry name" value="A2MG_CUB"/>
</dbReference>
<dbReference type="InterPro" id="IPR040639">
    <property type="entry name" value="A2MG_MG1"/>
</dbReference>
<dbReference type="InterPro" id="IPR026284">
    <property type="entry name" value="A2MG_proteobact"/>
</dbReference>
<dbReference type="InterPro" id="IPR047565">
    <property type="entry name" value="Alpha-macroglob_thiol-ester_cl"/>
</dbReference>
<dbReference type="InterPro" id="IPR011626">
    <property type="entry name" value="Alpha-macroglobulin_TED"/>
</dbReference>
<dbReference type="InterPro" id="IPR021868">
    <property type="entry name" value="Alpha_2_Macroglob_MG3"/>
</dbReference>
<dbReference type="InterPro" id="IPR041203">
    <property type="entry name" value="Bact_A2M_MG5"/>
</dbReference>
<dbReference type="InterPro" id="IPR041462">
    <property type="entry name" value="Bact_A2M_MG6"/>
</dbReference>
<dbReference type="InterPro" id="IPR041246">
    <property type="entry name" value="Bact_MG10"/>
</dbReference>
<dbReference type="InterPro" id="IPR001599">
    <property type="entry name" value="Macroglobln_a2"/>
</dbReference>
<dbReference type="InterPro" id="IPR002890">
    <property type="entry name" value="MG2"/>
</dbReference>
<dbReference type="InterPro" id="IPR008930">
    <property type="entry name" value="Terpenoid_cyclase/PrenylTrfase"/>
</dbReference>
<dbReference type="InterPro" id="IPR051802">
    <property type="entry name" value="YfhM-like"/>
</dbReference>
<dbReference type="PANTHER" id="PTHR40094">
    <property type="entry name" value="ALPHA-2-MACROGLOBULIN HOMOLOG"/>
    <property type="match status" value="1"/>
</dbReference>
<dbReference type="PANTHER" id="PTHR40094:SF1">
    <property type="entry name" value="UBIQUITIN DOMAIN-CONTAINING PROTEIN"/>
    <property type="match status" value="1"/>
</dbReference>
<dbReference type="Pfam" id="PF00207">
    <property type="entry name" value="A2M"/>
    <property type="match status" value="1"/>
</dbReference>
<dbReference type="Pfam" id="PF21142">
    <property type="entry name" value="A2M_bMG2"/>
    <property type="match status" value="1"/>
</dbReference>
<dbReference type="Pfam" id="PF07703">
    <property type="entry name" value="A2M_BRD"/>
    <property type="match status" value="1"/>
</dbReference>
<dbReference type="Pfam" id="PF17970">
    <property type="entry name" value="bMG1"/>
    <property type="match status" value="1"/>
</dbReference>
<dbReference type="Pfam" id="PF17973">
    <property type="entry name" value="bMG10"/>
    <property type="match status" value="1"/>
</dbReference>
<dbReference type="Pfam" id="PF11974">
    <property type="entry name" value="bMG3"/>
    <property type="match status" value="1"/>
</dbReference>
<dbReference type="Pfam" id="PF17972">
    <property type="entry name" value="bMG5"/>
    <property type="match status" value="1"/>
</dbReference>
<dbReference type="Pfam" id="PF17962">
    <property type="entry name" value="bMG6"/>
    <property type="match status" value="1"/>
</dbReference>
<dbReference type="Pfam" id="PF21765">
    <property type="entry name" value="CUB_A2MG"/>
    <property type="match status" value="1"/>
</dbReference>
<dbReference type="Pfam" id="PF01835">
    <property type="entry name" value="MG2"/>
    <property type="match status" value="1"/>
</dbReference>
<dbReference type="Pfam" id="PF07678">
    <property type="entry name" value="TED_complement"/>
    <property type="match status" value="1"/>
</dbReference>
<dbReference type="PIRSF" id="PIRSF038980">
    <property type="entry name" value="A2M_bac"/>
    <property type="match status" value="1"/>
</dbReference>
<dbReference type="SMART" id="SM01360">
    <property type="entry name" value="A2M"/>
    <property type="match status" value="1"/>
</dbReference>
<dbReference type="SMART" id="SM01359">
    <property type="entry name" value="A2M_N_2"/>
    <property type="match status" value="1"/>
</dbReference>
<dbReference type="SMART" id="SM01419">
    <property type="entry name" value="Thiol-ester_cl"/>
    <property type="match status" value="1"/>
</dbReference>
<dbReference type="SUPFAM" id="SSF48239">
    <property type="entry name" value="Terpenoid cyclases/Protein prenyltransferases"/>
    <property type="match status" value="1"/>
</dbReference>
<dbReference type="PROSITE" id="PS51257">
    <property type="entry name" value="PROKAR_LIPOPROTEIN"/>
    <property type="match status" value="1"/>
</dbReference>
<sequence length="1653" mass="181585">MKKLRVAACMLMLALAGCDNNDNAPTAVKKDAPSEVTKAASSENASSAKLSVPERQKLAQQSAGKVLTLLDLSEVQLDGAATLVLTFSIPLDPDQDFSRVIHVVDKKSGKVDGAWELSDNLKELRLRHLEPKRDLIVTIGKEVKALNNATFSKDYEKTITTRDIQPSVGFASRGSLLPGKVVEGLPVMALNVNNVDVNFFRVKPESLPAFISQWEYRNSLANWQSDKLLQMADLVYTGRFDLNPARNTREKLLLPLGDIKPLQQAGVYLAVMNQAGRYDYSNPATLFTLSDIGVSAHRYHNRLDIFTQSLENGAAQQGIEVSLLNEKGQTLTQATSDAQGHVQLENDKNAALLLARKDGQTTLLDLKLPALDLAEFNIAGAPGYSKQFFMFGPRDLYRPGETVILNGLLRDADGKALPNQPIKLDVIKPDGQVLRSVVSQPENGLYHFTWPLDSNAATGMWHIRANTGDNQYRMWDFHVEDFMPERMALNLTGEKTPLTPKDEVKFSVVGYYLYGAPANGNTLQGQLFLRPLREAVSALPGFEFGDIAAENLSRTLDEVQLTLDDKGRGEVSTESQWKETHSPLQVIFQGSLLESGGRPVTRRAEQAIWPADALPGIRPQFASKSVYDYRTDSTVKQPIVDEGSNAAFDIVYSDAQGVKKAVSGLQVRLIRERRDYYWNWSEDEGWQSQFDQKDLIENEQTLDLKADETGKVSFPVEWGAYRLEVKAPNEAVSSVRFWAGYSWQDNSDGSGAVRPDRVTLKLDKASYRPGDTIKLHIAAPTAGKGYAMVESSEGPLWWQEIDVRAQGLDLTIPVDKTWNRHDLYLSTLVVRPGDKSRSATPKRAVGVLHLPLGDENRRLDLALETPAKMRPNQPLTVKIKASTKNGEKPKQVNVLVSAVDSGVLNITDYVTPDPWQAFFGQKRYGADIYDIYGQVIEGQGRLAALRFGGDGDELKRGGKPPVNHVNIVVQQALPVTLNEQGEGSVTLPIGDFNGELRVMAQAWTADDFGSNESKVIVAAPVIAELNMPRFMASGDTSRLTLDITNLTDKPQKLNVALTASGLLELVSDSPAAVELAPGVRTTLFIPVRALPGYGDGEIQATISGLALPGETVADQHKQWKIGVRPAFPAQTVNYGTALQPGETWAIPADGLQNFSPVTLEGQLLLSGKPPLNIARYIKELKAYPYGCLEQTASGLFPSLYTNAAQLQALGIKGDSDEKRRASVDIGISRLLQMQRDNGGFALWDKNGDEEYWLTAYVMDFLVRAGEQGYSVPTDAINRGNERLLRYLQDPGMMSIPYADNLKASKFAVQSYAALVLARQQKAPLGALREIWEHRADAASGLPLLQLGVALKTMGDATRGEEAIALALKTPRNSDERIWLGDYGSSLRDNALMLSLLEENKLLPDEQYTLLNTLSQQAFGERWLSTQESNALFLAARTIQDLPGKWQAQTSFSAEQLTGEKAQNSNLNSDQLVTLQVSNSGDQPLWLRMDASGYPQSAPLPANNVLQIERHILGTDGKSKSLDSLRSGDLVLVWLQVKASNSVPDALVVDLLPAGLELENQNLANGSASLEQSGGEVQNLLNQMQQASIKHIEFRDDRFVAAVAVDEYQPVTLVYLARAVTPGTYQVPQPMVESMYVPQWRATGAAEDLLIVRP</sequence>
<feature type="signal peptide" evidence="2">
    <location>
        <begin position="1"/>
        <end position="17"/>
    </location>
</feature>
<feature type="chain" id="PRO_0000013775" description="Alpha-2-macroglobulin">
    <location>
        <begin position="18"/>
        <end position="1653"/>
    </location>
</feature>
<feature type="coiled-coil region" evidence="1">
    <location>
        <begin position="1559"/>
        <end position="1589"/>
    </location>
</feature>
<feature type="lipid moiety-binding region" description="N-palmitoyl cysteine" evidence="2">
    <location>
        <position position="18"/>
    </location>
</feature>
<feature type="lipid moiety-binding region" description="S-diacylglycerol cysteine" evidence="2">
    <location>
        <position position="18"/>
    </location>
</feature>
<feature type="cross-link" description="Isoglutamyl cysteine thioester (Cys-Gln)" evidence="3">
    <location>
        <begin position="1187"/>
        <end position="1190"/>
    </location>
</feature>
<feature type="turn" evidence="19">
    <location>
        <begin position="58"/>
        <end position="64"/>
    </location>
</feature>
<feature type="strand" evidence="19">
    <location>
        <begin position="69"/>
        <end position="77"/>
    </location>
</feature>
<feature type="strand" evidence="19">
    <location>
        <begin position="80"/>
        <end position="89"/>
    </location>
</feature>
<feature type="helix" evidence="19">
    <location>
        <begin position="97"/>
        <end position="100"/>
    </location>
</feature>
<feature type="strand" evidence="19">
    <location>
        <begin position="101"/>
        <end position="105"/>
    </location>
</feature>
<feature type="turn" evidence="19">
    <location>
        <begin position="106"/>
        <end position="108"/>
    </location>
</feature>
<feature type="strand" evidence="19">
    <location>
        <begin position="121"/>
        <end position="126"/>
    </location>
</feature>
<feature type="strand" evidence="19">
    <location>
        <begin position="134"/>
        <end position="139"/>
    </location>
</feature>
<feature type="strand" evidence="19">
    <location>
        <begin position="155"/>
        <end position="160"/>
    </location>
</feature>
<feature type="strand" evidence="20">
    <location>
        <begin position="167"/>
        <end position="173"/>
    </location>
</feature>
<feature type="strand" evidence="17">
    <location>
        <begin position="175"/>
        <end position="177"/>
    </location>
</feature>
<feature type="helix" evidence="20">
    <location>
        <begin position="181"/>
        <end position="183"/>
    </location>
</feature>
<feature type="strand" evidence="20">
    <location>
        <begin position="185"/>
        <end position="191"/>
    </location>
</feature>
<feature type="strand" evidence="20">
    <location>
        <begin position="194"/>
        <end position="202"/>
    </location>
</feature>
<feature type="helix" evidence="20">
    <location>
        <begin position="204"/>
        <end position="206"/>
    </location>
</feature>
<feature type="helix" evidence="20">
    <location>
        <begin position="207"/>
        <end position="215"/>
    </location>
</feature>
<feature type="turn" evidence="20">
    <location>
        <begin position="216"/>
        <end position="219"/>
    </location>
</feature>
<feature type="turn" evidence="17">
    <location>
        <begin position="222"/>
        <end position="224"/>
    </location>
</feature>
<feature type="helix" evidence="20">
    <location>
        <begin position="226"/>
        <end position="229"/>
    </location>
</feature>
<feature type="strand" evidence="20">
    <location>
        <begin position="232"/>
        <end position="241"/>
    </location>
</feature>
<feature type="strand" evidence="20">
    <location>
        <begin position="250"/>
        <end position="254"/>
    </location>
</feature>
<feature type="helix" evidence="20">
    <location>
        <begin position="260"/>
        <end position="263"/>
    </location>
</feature>
<feature type="strand" evidence="20">
    <location>
        <begin position="266"/>
        <end position="273"/>
    </location>
</feature>
<feature type="strand" evidence="19">
    <location>
        <begin position="276"/>
        <end position="278"/>
    </location>
</feature>
<feature type="strand" evidence="20">
    <location>
        <begin position="279"/>
        <end position="281"/>
    </location>
</feature>
<feature type="strand" evidence="20">
    <location>
        <begin position="284"/>
        <end position="289"/>
    </location>
</feature>
<feature type="strand" evidence="20">
    <location>
        <begin position="291"/>
        <end position="299"/>
    </location>
</feature>
<feature type="strand" evidence="20">
    <location>
        <begin position="302"/>
        <end position="309"/>
    </location>
</feature>
<feature type="turn" evidence="20">
    <location>
        <begin position="310"/>
        <end position="312"/>
    </location>
</feature>
<feature type="strand" evidence="20">
    <location>
        <begin position="320"/>
        <end position="324"/>
    </location>
</feature>
<feature type="strand" evidence="17">
    <location>
        <begin position="326"/>
        <end position="328"/>
    </location>
</feature>
<feature type="strand" evidence="20">
    <location>
        <begin position="330"/>
        <end position="335"/>
    </location>
</feature>
<feature type="strand" evidence="20">
    <location>
        <begin position="340"/>
        <end position="345"/>
    </location>
</feature>
<feature type="strand" evidence="20">
    <location>
        <begin position="352"/>
        <end position="357"/>
    </location>
</feature>
<feature type="strand" evidence="20">
    <location>
        <begin position="360"/>
        <end position="365"/>
    </location>
</feature>
<feature type="strand" evidence="17">
    <location>
        <begin position="385"/>
        <end position="391"/>
    </location>
</feature>
<feature type="strand" evidence="17">
    <location>
        <begin position="395"/>
        <end position="397"/>
    </location>
</feature>
<feature type="strand" evidence="17">
    <location>
        <begin position="402"/>
        <end position="410"/>
    </location>
</feature>
<feature type="strand" evidence="17">
    <location>
        <begin position="422"/>
        <end position="427"/>
    </location>
</feature>
<feature type="strand" evidence="17">
    <location>
        <begin position="433"/>
        <end position="439"/>
    </location>
</feature>
<feature type="strand" evidence="17">
    <location>
        <begin position="445"/>
        <end position="451"/>
    </location>
</feature>
<feature type="strand" evidence="17">
    <location>
        <begin position="459"/>
        <end position="466"/>
    </location>
</feature>
<feature type="strand" evidence="17">
    <location>
        <begin position="468"/>
        <end position="470"/>
    </location>
</feature>
<feature type="strand" evidence="17">
    <location>
        <begin position="473"/>
        <end position="479"/>
    </location>
</feature>
<feature type="strand" evidence="17">
    <location>
        <begin position="486"/>
        <end position="492"/>
    </location>
</feature>
<feature type="strand" evidence="17">
    <location>
        <begin position="504"/>
        <end position="512"/>
    </location>
</feature>
<feature type="turn" evidence="17">
    <location>
        <begin position="513"/>
        <end position="515"/>
    </location>
</feature>
<feature type="strand" evidence="17">
    <location>
        <begin position="522"/>
        <end position="531"/>
    </location>
</feature>
<feature type="strand" evidence="17">
    <location>
        <begin position="553"/>
        <end position="562"/>
    </location>
</feature>
<feature type="strand" evidence="17">
    <location>
        <begin position="567"/>
        <end position="573"/>
    </location>
</feature>
<feature type="strand" evidence="17">
    <location>
        <begin position="584"/>
        <end position="593"/>
    </location>
</feature>
<feature type="strand" evidence="17">
    <location>
        <begin position="599"/>
        <end position="608"/>
    </location>
</feature>
<feature type="strand" evidence="17">
    <location>
        <begin position="610"/>
        <end position="621"/>
    </location>
</feature>
<feature type="strand" evidence="17">
    <location>
        <begin position="623"/>
        <end position="628"/>
    </location>
</feature>
<feature type="turn" evidence="17">
    <location>
        <begin position="629"/>
        <end position="632"/>
    </location>
</feature>
<feature type="strand" evidence="17">
    <location>
        <begin position="633"/>
        <end position="641"/>
    </location>
</feature>
<feature type="strand" evidence="17">
    <location>
        <begin position="644"/>
        <end position="653"/>
    </location>
</feature>
<feature type="strand" evidence="17">
    <location>
        <begin position="662"/>
        <end position="671"/>
    </location>
</feature>
<feature type="strand" evidence="17">
    <location>
        <begin position="695"/>
        <end position="704"/>
    </location>
</feature>
<feature type="strand" evidence="17">
    <location>
        <begin position="710"/>
        <end position="715"/>
    </location>
</feature>
<feature type="strand" evidence="17">
    <location>
        <begin position="718"/>
        <end position="726"/>
    </location>
</feature>
<feature type="strand" evidence="17">
    <location>
        <begin position="732"/>
        <end position="740"/>
    </location>
</feature>
<feature type="turn" evidence="17">
    <location>
        <begin position="748"/>
        <end position="751"/>
    </location>
</feature>
<feature type="strand" evidence="17">
    <location>
        <begin position="759"/>
        <end position="765"/>
    </location>
</feature>
<feature type="strand" evidence="17">
    <location>
        <begin position="772"/>
        <end position="778"/>
    </location>
</feature>
<feature type="strand" evidence="17">
    <location>
        <begin position="786"/>
        <end position="790"/>
    </location>
</feature>
<feature type="strand" evidence="17">
    <location>
        <begin position="795"/>
        <end position="797"/>
    </location>
</feature>
<feature type="strand" evidence="17">
    <location>
        <begin position="808"/>
        <end position="813"/>
    </location>
</feature>
<feature type="strand" evidence="17">
    <location>
        <begin position="824"/>
        <end position="831"/>
    </location>
</feature>
<feature type="strand" evidence="17">
    <location>
        <begin position="842"/>
        <end position="849"/>
    </location>
</feature>
<feature type="helix" evidence="17">
    <location>
        <begin position="855"/>
        <end position="857"/>
    </location>
</feature>
<feature type="strand" evidence="17">
    <location>
        <begin position="860"/>
        <end position="864"/>
    </location>
</feature>
<feature type="strand" evidence="17">
    <location>
        <begin position="867"/>
        <end position="869"/>
    </location>
</feature>
<feature type="strand" evidence="17">
    <location>
        <begin position="873"/>
        <end position="882"/>
    </location>
</feature>
<feature type="turn" evidence="17">
    <location>
        <begin position="884"/>
        <end position="886"/>
    </location>
</feature>
<feature type="strand" evidence="17">
    <location>
        <begin position="893"/>
        <end position="900"/>
    </location>
</feature>
<feature type="helix" evidence="17">
    <location>
        <begin position="901"/>
        <end position="904"/>
    </location>
</feature>
<feature type="turn" evidence="17">
    <location>
        <begin position="905"/>
        <end position="908"/>
    </location>
</feature>
<feature type="helix" evidence="17">
    <location>
        <begin position="914"/>
        <end position="919"/>
    </location>
</feature>
<feature type="strand" evidence="17">
    <location>
        <begin position="927"/>
        <end position="931"/>
    </location>
</feature>
<feature type="helix" evidence="17">
    <location>
        <begin position="932"/>
        <end position="934"/>
    </location>
</feature>
<feature type="helix" evidence="17">
    <location>
        <begin position="952"/>
        <end position="957"/>
    </location>
</feature>
<feature type="strand" evidence="17">
    <location>
        <begin position="969"/>
        <end position="971"/>
    </location>
</feature>
<feature type="strand" evidence="17">
    <location>
        <begin position="981"/>
        <end position="988"/>
    </location>
</feature>
<feature type="strand" evidence="17">
    <location>
        <begin position="994"/>
        <end position="1006"/>
    </location>
</feature>
<feature type="strand" evidence="17">
    <location>
        <begin position="1008"/>
        <end position="1017"/>
    </location>
</feature>
<feature type="strand" evidence="17">
    <location>
        <begin position="1020"/>
        <end position="1026"/>
    </location>
</feature>
<feature type="strand" evidence="18">
    <location>
        <begin position="1029"/>
        <end position="1031"/>
    </location>
</feature>
<feature type="strand" evidence="17">
    <location>
        <begin position="1036"/>
        <end position="1045"/>
    </location>
</feature>
<feature type="strand" evidence="17">
    <location>
        <begin position="1047"/>
        <end position="1049"/>
    </location>
</feature>
<feature type="strand" evidence="17">
    <location>
        <begin position="1051"/>
        <end position="1061"/>
    </location>
</feature>
<feature type="strand" evidence="17">
    <location>
        <begin position="1063"/>
        <end position="1067"/>
    </location>
</feature>
<feature type="strand" evidence="17">
    <location>
        <begin position="1072"/>
        <end position="1075"/>
    </location>
</feature>
<feature type="strand" evidence="17">
    <location>
        <begin position="1080"/>
        <end position="1089"/>
    </location>
</feature>
<feature type="strand" evidence="17">
    <location>
        <begin position="1091"/>
        <end position="1103"/>
    </location>
</feature>
<feature type="strand" evidence="17">
    <location>
        <begin position="1108"/>
        <end position="1110"/>
    </location>
</feature>
<feature type="strand" evidence="17">
    <location>
        <begin position="1115"/>
        <end position="1124"/>
    </location>
</feature>
<feature type="strand" evidence="17">
    <location>
        <begin position="1130"/>
        <end position="1138"/>
    </location>
</feature>
<feature type="strand" evidence="17">
    <location>
        <begin position="1143"/>
        <end position="1145"/>
    </location>
</feature>
<feature type="turn" evidence="18">
    <location>
        <begin position="1150"/>
        <end position="1153"/>
    </location>
</feature>
<feature type="turn" evidence="17">
    <location>
        <begin position="1156"/>
        <end position="1158"/>
    </location>
</feature>
<feature type="strand" evidence="17">
    <location>
        <begin position="1160"/>
        <end position="1168"/>
    </location>
</feature>
<feature type="helix" evidence="17">
    <location>
        <begin position="1173"/>
        <end position="1175"/>
    </location>
</feature>
<feature type="strand" evidence="17">
    <location>
        <begin position="1178"/>
        <end position="1180"/>
    </location>
</feature>
<feature type="helix" evidence="17">
    <location>
        <begin position="1188"/>
        <end position="1193"/>
    </location>
</feature>
<feature type="helix" evidence="17">
    <location>
        <begin position="1196"/>
        <end position="1199"/>
    </location>
</feature>
<feature type="helix" evidence="17">
    <location>
        <begin position="1203"/>
        <end position="1209"/>
    </location>
</feature>
<feature type="helix" evidence="17">
    <location>
        <begin position="1216"/>
        <end position="1232"/>
    </location>
</feature>
<feature type="strand" evidence="17">
    <location>
        <begin position="1240"/>
        <end position="1243"/>
    </location>
</feature>
<feature type="helix" evidence="17">
    <location>
        <begin position="1251"/>
        <end position="1266"/>
    </location>
</feature>
<feature type="helix" evidence="17">
    <location>
        <begin position="1273"/>
        <end position="1288"/>
    </location>
</feature>
<feature type="helix" evidence="17">
    <location>
        <begin position="1290"/>
        <end position="1292"/>
    </location>
</feature>
<feature type="helix" evidence="17">
    <location>
        <begin position="1301"/>
        <end position="1317"/>
    </location>
</feature>
<feature type="turn" evidence="17">
    <location>
        <begin position="1318"/>
        <end position="1320"/>
    </location>
</feature>
<feature type="helix" evidence="17">
    <location>
        <begin position="1324"/>
        <end position="1332"/>
    </location>
</feature>
<feature type="helix" evidence="17">
    <location>
        <begin position="1333"/>
        <end position="1336"/>
    </location>
</feature>
<feature type="helix" evidence="17">
    <location>
        <begin position="1340"/>
        <end position="1353"/>
    </location>
</feature>
<feature type="helix" evidence="17">
    <location>
        <begin position="1356"/>
        <end position="1366"/>
    </location>
</feature>
<feature type="strand" evidence="17">
    <location>
        <begin position="1379"/>
        <end position="1381"/>
    </location>
</feature>
<feature type="helix" evidence="17">
    <location>
        <begin position="1385"/>
        <end position="1398"/>
    </location>
</feature>
<feature type="helix" evidence="17">
    <location>
        <begin position="1403"/>
        <end position="1418"/>
    </location>
</feature>
<feature type="helix" evidence="17">
    <location>
        <begin position="1425"/>
        <end position="1435"/>
    </location>
</feature>
<feature type="turn" evidence="17">
    <location>
        <begin position="1436"/>
        <end position="1440"/>
    </location>
</feature>
<feature type="strand" evidence="17">
    <location>
        <begin position="1445"/>
        <end position="1449"/>
    </location>
</feature>
<feature type="strand" evidence="17">
    <location>
        <begin position="1456"/>
        <end position="1460"/>
    </location>
</feature>
<feature type="strand" evidence="17">
    <location>
        <begin position="1462"/>
        <end position="1467"/>
    </location>
</feature>
<feature type="helix" evidence="17">
    <location>
        <begin position="1468"/>
        <end position="1472"/>
    </location>
</feature>
<feature type="strand" evidence="17">
    <location>
        <begin position="1475"/>
        <end position="1478"/>
    </location>
</feature>
<feature type="strand" evidence="17">
    <location>
        <begin position="1480"/>
        <end position="1482"/>
    </location>
</feature>
<feature type="strand" evidence="17">
    <location>
        <begin position="1484"/>
        <end position="1492"/>
    </location>
</feature>
<feature type="strand" evidence="17">
    <location>
        <begin position="1494"/>
        <end position="1496"/>
    </location>
</feature>
<feature type="strand" evidence="17">
    <location>
        <begin position="1502"/>
        <end position="1513"/>
    </location>
</feature>
<feature type="strand" evidence="17">
    <location>
        <begin position="1516"/>
        <end position="1518"/>
    </location>
</feature>
<feature type="strand" evidence="17">
    <location>
        <begin position="1523"/>
        <end position="1525"/>
    </location>
</feature>
<feature type="strand" evidence="17">
    <location>
        <begin position="1529"/>
        <end position="1540"/>
    </location>
</feature>
<feature type="strand" evidence="17">
    <location>
        <begin position="1542"/>
        <end position="1550"/>
    </location>
</feature>
<feature type="strand" evidence="17">
    <location>
        <begin position="1555"/>
        <end position="1557"/>
    </location>
</feature>
<feature type="helix" evidence="17">
    <location>
        <begin position="1563"/>
        <end position="1565"/>
    </location>
</feature>
<feature type="helix" evidence="17">
    <location>
        <begin position="1569"/>
        <end position="1572"/>
    </location>
</feature>
<feature type="helix" evidence="17">
    <location>
        <begin position="1574"/>
        <end position="1576"/>
    </location>
</feature>
<feature type="helix" evidence="17">
    <location>
        <begin position="1577"/>
        <end position="1585"/>
    </location>
</feature>
<feature type="strand" evidence="17">
    <location>
        <begin position="1586"/>
        <end position="1593"/>
    </location>
</feature>
<feature type="strand" evidence="17">
    <location>
        <begin position="1595"/>
        <end position="1605"/>
    </location>
</feature>
<feature type="strand" evidence="17">
    <location>
        <begin position="1610"/>
        <end position="1618"/>
    </location>
</feature>
<feature type="strand" evidence="17">
    <location>
        <begin position="1622"/>
        <end position="1624"/>
    </location>
</feature>
<feature type="strand" evidence="17">
    <location>
        <begin position="1630"/>
        <end position="1635"/>
    </location>
</feature>
<feature type="strand" evidence="17">
    <location>
        <begin position="1639"/>
        <end position="1642"/>
    </location>
</feature>
<feature type="strand" evidence="17">
    <location>
        <begin position="1649"/>
        <end position="1652"/>
    </location>
</feature>
<gene>
    <name type="primary">yfhM</name>
    <name type="ordered locus">b2520</name>
    <name type="ordered locus">JW2504</name>
</gene>
<organism>
    <name type="scientific">Escherichia coli (strain K12)</name>
    <dbReference type="NCBI Taxonomy" id="83333"/>
    <lineage>
        <taxon>Bacteria</taxon>
        <taxon>Pseudomonadati</taxon>
        <taxon>Pseudomonadota</taxon>
        <taxon>Gammaproteobacteria</taxon>
        <taxon>Enterobacterales</taxon>
        <taxon>Enterobacteriaceae</taxon>
        <taxon>Escherichia</taxon>
    </lineage>
</organism>
<protein>
    <recommendedName>
        <fullName evidence="7 8">Alpha-2-macroglobulin</fullName>
    </recommendedName>
    <alternativeName>
        <fullName evidence="8">ECAM</fullName>
    </alternativeName>
</protein>
<accession>P76578</accession>
<accession>Q2MAH7</accession>